<dbReference type="EC" id="2.4.2.7" evidence="1"/>
<dbReference type="EMBL" id="CP000736">
    <property type="protein sequence ID" value="ABR52571.1"/>
    <property type="molecule type" value="Genomic_DNA"/>
</dbReference>
<dbReference type="SMR" id="A6U2A3"/>
<dbReference type="KEGG" id="sah:SaurJH1_1725"/>
<dbReference type="HOGENOM" id="CLU_063339_3_0_9"/>
<dbReference type="UniPathway" id="UPA00588">
    <property type="reaction ID" value="UER00646"/>
</dbReference>
<dbReference type="GO" id="GO:0005737">
    <property type="term" value="C:cytoplasm"/>
    <property type="evidence" value="ECO:0007669"/>
    <property type="project" value="UniProtKB-SubCell"/>
</dbReference>
<dbReference type="GO" id="GO:0002055">
    <property type="term" value="F:adenine binding"/>
    <property type="evidence" value="ECO:0007669"/>
    <property type="project" value="TreeGrafter"/>
</dbReference>
<dbReference type="GO" id="GO:0003999">
    <property type="term" value="F:adenine phosphoribosyltransferase activity"/>
    <property type="evidence" value="ECO:0007669"/>
    <property type="project" value="UniProtKB-UniRule"/>
</dbReference>
<dbReference type="GO" id="GO:0016208">
    <property type="term" value="F:AMP binding"/>
    <property type="evidence" value="ECO:0007669"/>
    <property type="project" value="TreeGrafter"/>
</dbReference>
<dbReference type="GO" id="GO:0006168">
    <property type="term" value="P:adenine salvage"/>
    <property type="evidence" value="ECO:0007669"/>
    <property type="project" value="InterPro"/>
</dbReference>
<dbReference type="GO" id="GO:0044209">
    <property type="term" value="P:AMP salvage"/>
    <property type="evidence" value="ECO:0007669"/>
    <property type="project" value="UniProtKB-UniRule"/>
</dbReference>
<dbReference type="GO" id="GO:0006166">
    <property type="term" value="P:purine ribonucleoside salvage"/>
    <property type="evidence" value="ECO:0007669"/>
    <property type="project" value="UniProtKB-KW"/>
</dbReference>
<dbReference type="CDD" id="cd06223">
    <property type="entry name" value="PRTases_typeI"/>
    <property type="match status" value="1"/>
</dbReference>
<dbReference type="FunFam" id="3.40.50.2020:FF:000004">
    <property type="entry name" value="Adenine phosphoribosyltransferase"/>
    <property type="match status" value="1"/>
</dbReference>
<dbReference type="Gene3D" id="3.40.50.2020">
    <property type="match status" value="1"/>
</dbReference>
<dbReference type="HAMAP" id="MF_00004">
    <property type="entry name" value="Aden_phosphoribosyltr"/>
    <property type="match status" value="1"/>
</dbReference>
<dbReference type="InterPro" id="IPR005764">
    <property type="entry name" value="Ade_phspho_trans"/>
</dbReference>
<dbReference type="InterPro" id="IPR000836">
    <property type="entry name" value="PRibTrfase_dom"/>
</dbReference>
<dbReference type="InterPro" id="IPR029057">
    <property type="entry name" value="PRTase-like"/>
</dbReference>
<dbReference type="InterPro" id="IPR050054">
    <property type="entry name" value="UPRTase/APRTase"/>
</dbReference>
<dbReference type="NCBIfam" id="TIGR01090">
    <property type="entry name" value="apt"/>
    <property type="match status" value="1"/>
</dbReference>
<dbReference type="NCBIfam" id="NF002633">
    <property type="entry name" value="PRK02304.1-2"/>
    <property type="match status" value="1"/>
</dbReference>
<dbReference type="NCBIfam" id="NF002634">
    <property type="entry name" value="PRK02304.1-3"/>
    <property type="match status" value="1"/>
</dbReference>
<dbReference type="NCBIfam" id="NF002636">
    <property type="entry name" value="PRK02304.1-5"/>
    <property type="match status" value="1"/>
</dbReference>
<dbReference type="PANTHER" id="PTHR32315">
    <property type="entry name" value="ADENINE PHOSPHORIBOSYLTRANSFERASE"/>
    <property type="match status" value="1"/>
</dbReference>
<dbReference type="PANTHER" id="PTHR32315:SF3">
    <property type="entry name" value="ADENINE PHOSPHORIBOSYLTRANSFERASE"/>
    <property type="match status" value="1"/>
</dbReference>
<dbReference type="Pfam" id="PF00156">
    <property type="entry name" value="Pribosyltran"/>
    <property type="match status" value="1"/>
</dbReference>
<dbReference type="SUPFAM" id="SSF53271">
    <property type="entry name" value="PRTase-like"/>
    <property type="match status" value="1"/>
</dbReference>
<organism>
    <name type="scientific">Staphylococcus aureus (strain JH1)</name>
    <dbReference type="NCBI Taxonomy" id="359787"/>
    <lineage>
        <taxon>Bacteria</taxon>
        <taxon>Bacillati</taxon>
        <taxon>Bacillota</taxon>
        <taxon>Bacilli</taxon>
        <taxon>Bacillales</taxon>
        <taxon>Staphylococcaceae</taxon>
        <taxon>Staphylococcus</taxon>
    </lineage>
</organism>
<protein>
    <recommendedName>
        <fullName evidence="1">Adenine phosphoribosyltransferase</fullName>
        <shortName evidence="1">APRT</shortName>
        <ecNumber evidence="1">2.4.2.7</ecNumber>
    </recommendedName>
</protein>
<reference key="1">
    <citation type="submission" date="2007-06" db="EMBL/GenBank/DDBJ databases">
        <title>Complete sequence of chromosome of Staphylococcus aureus subsp. aureus JH1.</title>
        <authorList>
            <consortium name="US DOE Joint Genome Institute"/>
            <person name="Copeland A."/>
            <person name="Lucas S."/>
            <person name="Lapidus A."/>
            <person name="Barry K."/>
            <person name="Detter J.C."/>
            <person name="Glavina del Rio T."/>
            <person name="Hammon N."/>
            <person name="Israni S."/>
            <person name="Dalin E."/>
            <person name="Tice H."/>
            <person name="Pitluck S."/>
            <person name="Chain P."/>
            <person name="Malfatti S."/>
            <person name="Shin M."/>
            <person name="Vergez L."/>
            <person name="Schmutz J."/>
            <person name="Larimer F."/>
            <person name="Land M."/>
            <person name="Hauser L."/>
            <person name="Kyrpides N."/>
            <person name="Ivanova N."/>
            <person name="Tomasz A."/>
            <person name="Richardson P."/>
        </authorList>
    </citation>
    <scope>NUCLEOTIDE SEQUENCE [LARGE SCALE GENOMIC DNA]</scope>
    <source>
        <strain>JH1</strain>
    </source>
</reference>
<accession>A6U2A3</accession>
<proteinExistence type="inferred from homology"/>
<feature type="chain" id="PRO_1000073806" description="Adenine phosphoribosyltransferase">
    <location>
        <begin position="1"/>
        <end position="172"/>
    </location>
</feature>
<evidence type="ECO:0000255" key="1">
    <source>
        <dbReference type="HAMAP-Rule" id="MF_00004"/>
    </source>
</evidence>
<name>APT_STAA2</name>
<sequence length="172" mass="19117">MDLKQYVSEVQDWPKPGVSFKDITTIMDNGEAYGYATDKIVEYAKDRDVDIVVGPEARGFIIGCPVAYSMGIGFAPVRKEGKLPREVIRYEYDLEYGTNVLTMHKDAIKPGQRVLITDDLLATGGTIEAAIKLVEKLGGIVVGIAFIIELKYLNGIEKIKDYDVMSLISYDE</sequence>
<comment type="function">
    <text evidence="1">Catalyzes a salvage reaction resulting in the formation of AMP, that is energically less costly than de novo synthesis.</text>
</comment>
<comment type="catalytic activity">
    <reaction evidence="1">
        <text>AMP + diphosphate = 5-phospho-alpha-D-ribose 1-diphosphate + adenine</text>
        <dbReference type="Rhea" id="RHEA:16609"/>
        <dbReference type="ChEBI" id="CHEBI:16708"/>
        <dbReference type="ChEBI" id="CHEBI:33019"/>
        <dbReference type="ChEBI" id="CHEBI:58017"/>
        <dbReference type="ChEBI" id="CHEBI:456215"/>
        <dbReference type="EC" id="2.4.2.7"/>
    </reaction>
</comment>
<comment type="pathway">
    <text evidence="1">Purine metabolism; AMP biosynthesis via salvage pathway; AMP from adenine: step 1/1.</text>
</comment>
<comment type="subunit">
    <text evidence="1">Homodimer.</text>
</comment>
<comment type="subcellular location">
    <subcellularLocation>
        <location evidence="1">Cytoplasm</location>
    </subcellularLocation>
</comment>
<comment type="similarity">
    <text evidence="1">Belongs to the purine/pyrimidine phosphoribosyltransferase family.</text>
</comment>
<gene>
    <name evidence="1" type="primary">apt</name>
    <name type="ordered locus">SaurJH1_1725</name>
</gene>
<keyword id="KW-0963">Cytoplasm</keyword>
<keyword id="KW-0328">Glycosyltransferase</keyword>
<keyword id="KW-0660">Purine salvage</keyword>
<keyword id="KW-0808">Transferase</keyword>